<dbReference type="EC" id="2.1.1.320" evidence="2"/>
<dbReference type="EMBL" id="CR860596">
    <property type="protein sequence ID" value="CAH92718.1"/>
    <property type="molecule type" value="mRNA"/>
</dbReference>
<dbReference type="RefSeq" id="NP_001126589.1">
    <property type="nucleotide sequence ID" value="NM_001133117.1"/>
</dbReference>
<dbReference type="SMR" id="Q5R698"/>
<dbReference type="STRING" id="9601.ENSPPYP00000006422"/>
<dbReference type="GeneID" id="100173581"/>
<dbReference type="KEGG" id="pon:100173581"/>
<dbReference type="CTD" id="10419"/>
<dbReference type="eggNOG" id="KOG0822">
    <property type="taxonomic scope" value="Eukaryota"/>
</dbReference>
<dbReference type="InParanoid" id="Q5R698"/>
<dbReference type="OrthoDB" id="1368803at2759"/>
<dbReference type="Proteomes" id="UP000001595">
    <property type="component" value="Unplaced"/>
</dbReference>
<dbReference type="GO" id="GO:0005829">
    <property type="term" value="C:cytosol"/>
    <property type="evidence" value="ECO:0000250"/>
    <property type="project" value="UniProtKB"/>
</dbReference>
<dbReference type="GO" id="GO:0005794">
    <property type="term" value="C:Golgi apparatus"/>
    <property type="evidence" value="ECO:0000250"/>
    <property type="project" value="UniProtKB"/>
</dbReference>
<dbReference type="GO" id="GO:0034709">
    <property type="term" value="C:methylosome"/>
    <property type="evidence" value="ECO:0000250"/>
    <property type="project" value="UniProtKB"/>
</dbReference>
<dbReference type="GO" id="GO:0005634">
    <property type="term" value="C:nucleus"/>
    <property type="evidence" value="ECO:0000250"/>
    <property type="project" value="UniProtKB"/>
</dbReference>
<dbReference type="GO" id="GO:0070888">
    <property type="term" value="F:E-box binding"/>
    <property type="evidence" value="ECO:0000250"/>
    <property type="project" value="UniProtKB"/>
</dbReference>
<dbReference type="GO" id="GO:0008469">
    <property type="term" value="F:histone arginine N-methyltransferase activity"/>
    <property type="evidence" value="ECO:0007669"/>
    <property type="project" value="TreeGrafter"/>
</dbReference>
<dbReference type="GO" id="GO:0044020">
    <property type="term" value="F:histone H4R3 methyltransferase activity"/>
    <property type="evidence" value="ECO:0000250"/>
    <property type="project" value="UniProtKB"/>
</dbReference>
<dbReference type="GO" id="GO:0008327">
    <property type="term" value="F:methyl-CpG binding"/>
    <property type="evidence" value="ECO:0000250"/>
    <property type="project" value="UniProtKB"/>
</dbReference>
<dbReference type="GO" id="GO:0016274">
    <property type="term" value="F:protein-arginine N-methyltransferase activity"/>
    <property type="evidence" value="ECO:0000250"/>
    <property type="project" value="UniProtKB"/>
</dbReference>
<dbReference type="GO" id="GO:0035243">
    <property type="term" value="F:protein-arginine omega-N symmetric methyltransferase activity"/>
    <property type="evidence" value="ECO:0000250"/>
    <property type="project" value="UniProtKB"/>
</dbReference>
<dbReference type="GO" id="GO:0003714">
    <property type="term" value="F:transcription corepressor activity"/>
    <property type="evidence" value="ECO:0000250"/>
    <property type="project" value="UniProtKB"/>
</dbReference>
<dbReference type="GO" id="GO:0032922">
    <property type="term" value="P:circadian regulation of gene expression"/>
    <property type="evidence" value="ECO:0000250"/>
    <property type="project" value="UniProtKB"/>
</dbReference>
<dbReference type="GO" id="GO:0006353">
    <property type="term" value="P:DNA-templated transcription termination"/>
    <property type="evidence" value="ECO:0000250"/>
    <property type="project" value="UniProtKB"/>
</dbReference>
<dbReference type="GO" id="GO:0042118">
    <property type="term" value="P:endothelial cell activation"/>
    <property type="evidence" value="ECO:0000250"/>
    <property type="project" value="UniProtKB"/>
</dbReference>
<dbReference type="GO" id="GO:0090161">
    <property type="term" value="P:Golgi ribbon formation"/>
    <property type="evidence" value="ECO:0000250"/>
    <property type="project" value="UniProtKB"/>
</dbReference>
<dbReference type="GO" id="GO:0018216">
    <property type="term" value="P:peptidyl-arginine methylation"/>
    <property type="evidence" value="ECO:0000250"/>
    <property type="project" value="UniProtKB"/>
</dbReference>
<dbReference type="GO" id="GO:0000387">
    <property type="term" value="P:spliceosomal snRNP assembly"/>
    <property type="evidence" value="ECO:0000250"/>
    <property type="project" value="UniProtKB"/>
</dbReference>
<dbReference type="CDD" id="cd02440">
    <property type="entry name" value="AdoMet_MTases"/>
    <property type="match status" value="1"/>
</dbReference>
<dbReference type="FunFam" id="2.70.160.11:FF:000003">
    <property type="entry name" value="Protein arginine N-methyltransferase 5"/>
    <property type="match status" value="1"/>
</dbReference>
<dbReference type="FunFam" id="3.20.20.150:FF:000008">
    <property type="entry name" value="Protein arginine N-methyltransferase 5"/>
    <property type="match status" value="1"/>
</dbReference>
<dbReference type="FunFam" id="3.40.50.150:FF:000029">
    <property type="entry name" value="Protein arginine N-methyltransferase 5"/>
    <property type="match status" value="1"/>
</dbReference>
<dbReference type="Gene3D" id="3.20.20.150">
    <property type="entry name" value="Divalent-metal-dependent TIM barrel enzymes"/>
    <property type="match status" value="1"/>
</dbReference>
<dbReference type="Gene3D" id="2.70.160.11">
    <property type="entry name" value="Hnrnp arginine n-methyltransferase1"/>
    <property type="match status" value="1"/>
</dbReference>
<dbReference type="Gene3D" id="3.40.50.150">
    <property type="entry name" value="Vaccinia Virus protein VP39"/>
    <property type="match status" value="1"/>
</dbReference>
<dbReference type="InterPro" id="IPR025799">
    <property type="entry name" value="Arg_MeTrfase"/>
</dbReference>
<dbReference type="InterPro" id="IPR007857">
    <property type="entry name" value="Arg_MeTrfase_PRMT5"/>
</dbReference>
<dbReference type="InterPro" id="IPR035075">
    <property type="entry name" value="PRMT5"/>
</dbReference>
<dbReference type="InterPro" id="IPR035248">
    <property type="entry name" value="PRMT5_C"/>
</dbReference>
<dbReference type="InterPro" id="IPR035247">
    <property type="entry name" value="PRMT5_TIM"/>
</dbReference>
<dbReference type="InterPro" id="IPR029063">
    <property type="entry name" value="SAM-dependent_MTases_sf"/>
</dbReference>
<dbReference type="PANTHER" id="PTHR10738">
    <property type="entry name" value="PROTEIN ARGININE N-METHYLTRANSFERASE 5"/>
    <property type="match status" value="1"/>
</dbReference>
<dbReference type="PANTHER" id="PTHR10738:SF0">
    <property type="entry name" value="PROTEIN ARGININE N-METHYLTRANSFERASE 5"/>
    <property type="match status" value="1"/>
</dbReference>
<dbReference type="Pfam" id="PF05185">
    <property type="entry name" value="PRMT5"/>
    <property type="match status" value="1"/>
</dbReference>
<dbReference type="Pfam" id="PF17286">
    <property type="entry name" value="PRMT5_C"/>
    <property type="match status" value="1"/>
</dbReference>
<dbReference type="Pfam" id="PF17285">
    <property type="entry name" value="PRMT5_TIM"/>
    <property type="match status" value="1"/>
</dbReference>
<dbReference type="PIRSF" id="PIRSF015894">
    <property type="entry name" value="Skb1_MeTrfase"/>
    <property type="match status" value="1"/>
</dbReference>
<dbReference type="SUPFAM" id="SSF53335">
    <property type="entry name" value="S-adenosyl-L-methionine-dependent methyltransferases"/>
    <property type="match status" value="1"/>
</dbReference>
<dbReference type="PROSITE" id="PS51678">
    <property type="entry name" value="SAM_MT_PRMT"/>
    <property type="match status" value="1"/>
</dbReference>
<sequence>MAAMAVGGAGGSRVSSGRDLNCVPEIADTLGAVAKQGFDFLCMPVFHPRFKREFIQEPAKNRPGPQTRSDLLLSGRDWNTLIVGKLSPWIRPDSEVEKIRRNSEAAMLQELNFGAYLGLPAFLLPLNQEDNTNLARVLTNHIHTGHHSSMFWMRVPLVAPEDLRDDIIENAPTTHTQEYSGEEKTWIWWHNFRTLCDYSKRIAVALEIGADLPSNHVIDRWLGEPIKAAILPTSIFLTNKKGFPVLSKMHQRLIFRLLKLEVQFIITGTNHHSEKEFCSYLQYLEYLSQNRPPPNAYELFAKGYEDYLQSPLQPLMDNLESQTYEVFEKDPIKYSQYQQAIYKCLLDRVPEEEKDTNVQVLMVLGAGRGPLVNASLRAAKQADRRIKLYAVEKNPNAVVTLENWQFEEWGSQVTVVSSDMREWVAPEKADIIVSELLGSFADNELSPECLDGAQHFLKDDGVSIPGEYTSFLAPISSSKLYNEVRACREKDRDPEAQFEMPYVVRLHNFHQLSAPQPCFTFSHPNRDPMIDNNRYCTLEFPVEVNTVLHGFAGYFETVLYQDITLSIRPETHSPGMFSWFPILFPIKQPITVREGQTICVRFWRCSNSKKVWYEWAVTAPVCSAIHNPTGRSYTIGL</sequence>
<feature type="initiator methionine" description="Removed" evidence="2">
    <location>
        <position position="1"/>
    </location>
</feature>
<feature type="chain" id="PRO_0000212345" description="Protein arginine N-methyltransferase 5">
    <location>
        <begin position="2"/>
        <end position="637"/>
    </location>
</feature>
<feature type="domain" description="SAM-dependent MTase PRMT-type" evidence="5">
    <location>
        <begin position="308"/>
        <end position="615"/>
    </location>
</feature>
<feature type="region of interest" description="TIM barrel" evidence="2">
    <location>
        <begin position="13"/>
        <end position="292"/>
    </location>
</feature>
<feature type="region of interest" description="Beta barrel" evidence="2">
    <location>
        <begin position="465"/>
        <end position="637"/>
    </location>
</feature>
<feature type="region of interest" description="Dimerization" evidence="2">
    <location>
        <begin position="488"/>
        <end position="494"/>
    </location>
</feature>
<feature type="active site" description="Proton donor/acceptor" evidence="2">
    <location>
        <position position="435"/>
    </location>
</feature>
<feature type="active site" description="Proton donor/acceptor" evidence="2">
    <location>
        <position position="444"/>
    </location>
</feature>
<feature type="binding site" evidence="2">
    <location>
        <position position="324"/>
    </location>
    <ligand>
        <name>S-adenosyl-L-methionine</name>
        <dbReference type="ChEBI" id="CHEBI:59789"/>
    </ligand>
</feature>
<feature type="binding site" evidence="2">
    <location>
        <position position="327"/>
    </location>
    <ligand>
        <name>a protein</name>
        <dbReference type="ChEBI" id="CHEBI:16541"/>
        <note>substrate</note>
    </ligand>
    <ligandPart>
        <name>L-arginine residue</name>
        <dbReference type="ChEBI" id="CHEBI:29965"/>
    </ligandPart>
</feature>
<feature type="binding site" evidence="2">
    <location>
        <begin position="333"/>
        <end position="334"/>
    </location>
    <ligand>
        <name>S-adenosyl-L-methionine</name>
        <dbReference type="ChEBI" id="CHEBI:59789"/>
    </ligand>
</feature>
<feature type="binding site" evidence="2">
    <location>
        <position position="392"/>
    </location>
    <ligand>
        <name>S-adenosyl-L-methionine</name>
        <dbReference type="ChEBI" id="CHEBI:59789"/>
    </ligand>
</feature>
<feature type="binding site" evidence="2">
    <location>
        <begin position="419"/>
        <end position="420"/>
    </location>
    <ligand>
        <name>S-adenosyl-L-methionine</name>
        <dbReference type="ChEBI" id="CHEBI:59789"/>
    </ligand>
</feature>
<feature type="binding site" evidence="2">
    <location>
        <position position="435"/>
    </location>
    <ligand>
        <name>a protein</name>
        <dbReference type="ChEBI" id="CHEBI:16541"/>
        <note>substrate</note>
    </ligand>
    <ligandPart>
        <name>L-arginine residue</name>
        <dbReference type="ChEBI" id="CHEBI:29965"/>
    </ligandPart>
</feature>
<feature type="binding site" evidence="2">
    <location>
        <position position="444"/>
    </location>
    <ligand>
        <name>a protein</name>
        <dbReference type="ChEBI" id="CHEBI:16541"/>
        <note>substrate</note>
    </ligand>
    <ligandPart>
        <name>L-arginine residue</name>
        <dbReference type="ChEBI" id="CHEBI:29965"/>
    </ligandPart>
</feature>
<feature type="site" description="Critical for specifying symmetric addition of methyl groups" evidence="3">
    <location>
        <position position="327"/>
    </location>
</feature>
<feature type="modified residue" description="N-acetylalanine" evidence="2">
    <location>
        <position position="2"/>
    </location>
</feature>
<protein>
    <recommendedName>
        <fullName>Protein arginine N-methyltransferase 5</fullName>
        <shortName>PRMT5</shortName>
        <ecNumber evidence="2">2.1.1.320</ecNumber>
    </recommendedName>
    <alternativeName>
        <fullName>Histone-arginine N-methyltransferase PRMT5</fullName>
    </alternativeName>
    <alternativeName>
        <fullName>Shk1 kinase-binding protein 1 homolog</fullName>
        <shortName>SKB1 homolog</shortName>
    </alternativeName>
</protein>
<keyword id="KW-0007">Acetylation</keyword>
<keyword id="KW-0090">Biological rhythms</keyword>
<keyword id="KW-0156">Chromatin regulator</keyword>
<keyword id="KW-0963">Cytoplasm</keyword>
<keyword id="KW-0333">Golgi apparatus</keyword>
<keyword id="KW-0489">Methyltransferase</keyword>
<keyword id="KW-0539">Nucleus</keyword>
<keyword id="KW-1185">Reference proteome</keyword>
<keyword id="KW-0678">Repressor</keyword>
<keyword id="KW-0949">S-adenosyl-L-methionine</keyword>
<keyword id="KW-0804">Transcription</keyword>
<keyword id="KW-0805">Transcription regulation</keyword>
<keyword id="KW-0808">Transferase</keyword>
<name>ANM5_PONAB</name>
<reference key="1">
    <citation type="submission" date="2004-11" db="EMBL/GenBank/DDBJ databases">
        <authorList>
            <consortium name="The German cDNA consortium"/>
        </authorList>
    </citation>
    <scope>NUCLEOTIDE SEQUENCE [LARGE SCALE MRNA]</scope>
    <source>
        <tissue>Brain cortex</tissue>
    </source>
</reference>
<gene>
    <name type="primary">PRMT5</name>
    <name type="synonym">SKB1</name>
</gene>
<accession>Q5R698</accession>
<organism>
    <name type="scientific">Pongo abelii</name>
    <name type="common">Sumatran orangutan</name>
    <name type="synonym">Pongo pygmaeus abelii</name>
    <dbReference type="NCBI Taxonomy" id="9601"/>
    <lineage>
        <taxon>Eukaryota</taxon>
        <taxon>Metazoa</taxon>
        <taxon>Chordata</taxon>
        <taxon>Craniata</taxon>
        <taxon>Vertebrata</taxon>
        <taxon>Euteleostomi</taxon>
        <taxon>Mammalia</taxon>
        <taxon>Eutheria</taxon>
        <taxon>Euarchontoglires</taxon>
        <taxon>Primates</taxon>
        <taxon>Haplorrhini</taxon>
        <taxon>Catarrhini</taxon>
        <taxon>Hominidae</taxon>
        <taxon>Pongo</taxon>
    </lineage>
</organism>
<evidence type="ECO:0000250" key="1"/>
<evidence type="ECO:0000250" key="2">
    <source>
        <dbReference type="UniProtKB" id="O14744"/>
    </source>
</evidence>
<evidence type="ECO:0000250" key="3">
    <source>
        <dbReference type="UniProtKB" id="P46580"/>
    </source>
</evidence>
<evidence type="ECO:0000250" key="4">
    <source>
        <dbReference type="UniProtKB" id="Q8CIG8"/>
    </source>
</evidence>
<evidence type="ECO:0000255" key="5">
    <source>
        <dbReference type="PROSITE-ProRule" id="PRU01015"/>
    </source>
</evidence>
<comment type="function">
    <text evidence="2 4">Arginine methyltransferase that can both catalyze the formation of omega-N monomethylarginine (MMA) and symmetrical dimethylarginine (sDMA), with a preference for the formation of MMA. Specifically mediates the symmetrical dimethylation of arginine residues in the small nuclear ribonucleoproteins Sm D1 (SNRPD1) and Sm D3 (SNRPD3); such methylation being required for the assembly and biogenesis of snRNP core particles. Methylates SUPT5H and may regulate its transcriptional elongation properties (By similarity). May methylate the N-terminal region of MBD2 (By similarity). Mono- and dimethylates arginine residues of myelin basic protein (MBP) in vitro. May play a role in cytokine-activated transduction pathways. Negatively regulates cyclin E1 promoter activity and cellular proliferation. Methylates histone H2A and H4 'Arg-3' during germ cell development (By similarity). Methylates histone H3 'Arg-8', which may repress transcription (By similarity). Methylates the Piwi proteins (PIWIL1, PIWIL2 and PIWIL4), methylation of Piwi proteins being required for the interaction with Tudor domain-containing proteins and subsequent localization to the meiotic nuage (By similarity). Methylates RPS10. Attenuates EGF signaling through the MAPK1/MAPK3 pathway acting at 2 levels. First, monomethylates EGFR; this enhances EGFR 'Tyr-1197' phosphorylation and PTPN6 recruitment, eventually leading to reduced SOS1 phosphorylation. Second, methylates RAF1 and probably BRAF, hence destabilizing these 2 signaling proteins and reducing their catalytic activity. Required for induction of E-selectin and VCAM-1, on the endothelial cells surface at sites of inflammation. Methylates HOXA9. Methylates and regulates SRGAP2 which is involved in cell migration and differentiation (By similarity). Acts as a transcriptional corepressor in CRY1-mediated repression of the core circadian component PER1 by regulating the H4R3 dimethylation at the PER1 promoter (By similarity). Methylates GM130/GOLGA2, regulating Golgi ribbon formation. Methylates H4R3 in genes involved in glioblastomagenesis in a CHTOP- and/or TET1-dependent manner. Symmetrically methylates POLR2A, a modification that allows the recruitment to POLR2A of proteins including SMN1/SMN2 and SETX. This is required for resolving RNA-DNA hybrids created by RNA polymerase II, that form R-loop in transcription terminal regions, an important step in proper transcription termination. Along with LYAR, binds the promoter of gamma-globin HBG1/HBG2 and represses its expression. Symmetrically methylates NCL. Methylates p53/TP53; methylation might possibly affect p53/TP53 target gene specificity (By similarity). Involved in spliceosome maturation and mRNA splicing in prophase I spermatocytes through the catalysis of the symmetrical arginine dimethylation of SNRPB (small nuclear ribonucleoprotein-associated protein) and the interaction with tudor domain-containing protein TDRD6 (By similarity).</text>
</comment>
<comment type="catalytic activity">
    <reaction evidence="2">
        <text>L-arginyl-[protein] + 2 S-adenosyl-L-methionine = N(omega),N(omega)'-dimethyl-L-arginyl-[protein] + 2 S-adenosyl-L-homocysteine + 2 H(+)</text>
        <dbReference type="Rhea" id="RHEA:48108"/>
        <dbReference type="Rhea" id="RHEA-COMP:10532"/>
        <dbReference type="Rhea" id="RHEA-COMP:11992"/>
        <dbReference type="ChEBI" id="CHEBI:15378"/>
        <dbReference type="ChEBI" id="CHEBI:29965"/>
        <dbReference type="ChEBI" id="CHEBI:57856"/>
        <dbReference type="ChEBI" id="CHEBI:59789"/>
        <dbReference type="ChEBI" id="CHEBI:88221"/>
        <dbReference type="EC" id="2.1.1.320"/>
    </reaction>
</comment>
<comment type="activity regulation">
    <text evidence="1">Activity is increased by EGF, HGF, FGF1 or FGF2 treatments, and slightly decreased by NGF treatment.</text>
</comment>
<comment type="subunit">
    <text evidence="2 4">Forms, at least, homodimers and homotetramers. Component of the methylosome complex, composed of PRMT5, WDR77 and CLNS1A. Found in a complex composed of PRMT5, WDR77 and RIOK1. RIOK1 and CLNS1A associate with PRMT5 in a mutually exclusive fashion, which allows the recruitment of distinct methylation substrates, such as nucleolin/NCL and Sm proteins, respectively (By similarity). Interacts with PRDM1 (By similarity). Identified in a complex composed of methylosome and PRMT1 and ERH. Interacts with EGFR; methylates EGFR and stimulates EGFR-mediated ERK activation. Interacts with HOXA9. Interacts with SRGAP2. Found in a complex with COPRS, RUNX1 and CBFB. Interacts with CHTOP; the interaction symmetrically methylates CHTOP, but seems to require the presence of PRMT1. Interacts with EPB41L3; this modulates methylation of target proteins. Component of a high molecular weight E2F-pocket protein complex, CERC (cyclin E1 repressor complex). Associates with SWI/SNF remodeling complexes containing SMARCA2 and SMARCA4. Interacts with JAK2, SSTR1, SUPT5H, BRAF and with active RAF1. Interacts with LSM11, PRMT7 and SNRPD3. Interacts with COPRS; promoting its recruitment on histone H4. Interacts with CLNS1A/pICln. Identified in a complex with CLNS1A/pICln and Sm proteins. Interacts with RPS10. Interacts with WDR77. Interacts with IWS1. Interacts with CRY1. Interacts with POLR2A. Interacts with SMN1/SMN2. Interacts with LYAR; this interaction is direct. Interacts with TTC5/STRAP; this interaction is DNA damage-dependent and promotes PRMT5 interaction with p53/TP53. Interacts with p53/TP53 in response to DNA damage; the interaction is TTC5/STRAP dependent. Interacts with FAM47E; the interaction is direct, promotes PRMT5 localization to chromatin, and does not disrupt its association with WDR77 or STUB1 (By similarity). Interacts with TDRD6 (By similarity). Interacts with STUB1 (By similarity). Interacts with MBD2 (By similarity). Does not interact with MBD3 (By similarity).</text>
</comment>
<comment type="subcellular location">
    <subcellularLocation>
        <location evidence="2">Cytoplasm</location>
    </subcellularLocation>
    <subcellularLocation>
        <location evidence="2">Nucleus</location>
    </subcellularLocation>
    <subcellularLocation>
        <location evidence="2">Golgi apparatus</location>
    </subcellularLocation>
    <text evidence="2">Localizes to promoter regions of target genes on chromosomes (By similarity). Localizes to methylated chromatin (By similarity).</text>
</comment>
<comment type="similarity">
    <text evidence="5">Belongs to the class I-like SAM-binding methyltransferase superfamily. Protein arginine N-methyltransferase family.</text>
</comment>
<proteinExistence type="evidence at transcript level"/>